<keyword id="KW-0067">ATP-binding</keyword>
<keyword id="KW-0143">Chaperone</keyword>
<keyword id="KW-0479">Metal-binding</keyword>
<keyword id="KW-0547">Nucleotide-binding</keyword>
<keyword id="KW-0862">Zinc</keyword>
<comment type="function">
    <text evidence="1">ATP-dependent specificity component of the Clp protease. It directs the protease to specific substrates. Can perform chaperone functions in the absence of ClpP.</text>
</comment>
<comment type="subunit">
    <text evidence="1">Component of the ClpX-ClpP complex. Forms a hexameric ring that, in the presence of ATP, binds to fourteen ClpP subunits assembled into a disk-like structure with a central cavity, resembling the structure of eukaryotic proteasomes.</text>
</comment>
<comment type="similarity">
    <text evidence="1">Belongs to the ClpX chaperone family.</text>
</comment>
<accession>A6U2E2</accession>
<organism>
    <name type="scientific">Staphylococcus aureus (strain JH1)</name>
    <dbReference type="NCBI Taxonomy" id="359787"/>
    <lineage>
        <taxon>Bacteria</taxon>
        <taxon>Bacillati</taxon>
        <taxon>Bacillota</taxon>
        <taxon>Bacilli</taxon>
        <taxon>Bacillales</taxon>
        <taxon>Staphylococcaceae</taxon>
        <taxon>Staphylococcus</taxon>
    </lineage>
</organism>
<name>CLPX_STAA2</name>
<evidence type="ECO:0000255" key="1">
    <source>
        <dbReference type="HAMAP-Rule" id="MF_00175"/>
    </source>
</evidence>
<evidence type="ECO:0000255" key="2">
    <source>
        <dbReference type="PROSITE-ProRule" id="PRU01250"/>
    </source>
</evidence>
<feature type="chain" id="PRO_1000077179" description="ATP-dependent Clp protease ATP-binding subunit ClpX">
    <location>
        <begin position="1"/>
        <end position="420"/>
    </location>
</feature>
<feature type="domain" description="ClpX-type ZB" evidence="2">
    <location>
        <begin position="1"/>
        <end position="54"/>
    </location>
</feature>
<feature type="binding site" evidence="2">
    <location>
        <position position="13"/>
    </location>
    <ligand>
        <name>Zn(2+)</name>
        <dbReference type="ChEBI" id="CHEBI:29105"/>
    </ligand>
</feature>
<feature type="binding site" evidence="2">
    <location>
        <position position="16"/>
    </location>
    <ligand>
        <name>Zn(2+)</name>
        <dbReference type="ChEBI" id="CHEBI:29105"/>
    </ligand>
</feature>
<feature type="binding site" evidence="2">
    <location>
        <position position="35"/>
    </location>
    <ligand>
        <name>Zn(2+)</name>
        <dbReference type="ChEBI" id="CHEBI:29105"/>
    </ligand>
</feature>
<feature type="binding site" evidence="2">
    <location>
        <position position="38"/>
    </location>
    <ligand>
        <name>Zn(2+)</name>
        <dbReference type="ChEBI" id="CHEBI:29105"/>
    </ligand>
</feature>
<feature type="binding site" evidence="1">
    <location>
        <begin position="118"/>
        <end position="125"/>
    </location>
    <ligand>
        <name>ATP</name>
        <dbReference type="ChEBI" id="CHEBI:30616"/>
    </ligand>
</feature>
<gene>
    <name evidence="1" type="primary">clpX</name>
    <name type="ordered locus">SaurJH1_1766</name>
</gene>
<proteinExistence type="inferred from homology"/>
<dbReference type="EMBL" id="CP000736">
    <property type="protein sequence ID" value="ABR52610.1"/>
    <property type="molecule type" value="Genomic_DNA"/>
</dbReference>
<dbReference type="SMR" id="A6U2E2"/>
<dbReference type="KEGG" id="sah:SaurJH1_1766"/>
<dbReference type="HOGENOM" id="CLU_014218_8_2_9"/>
<dbReference type="GO" id="GO:0009376">
    <property type="term" value="C:HslUV protease complex"/>
    <property type="evidence" value="ECO:0007669"/>
    <property type="project" value="TreeGrafter"/>
</dbReference>
<dbReference type="GO" id="GO:0005524">
    <property type="term" value="F:ATP binding"/>
    <property type="evidence" value="ECO:0007669"/>
    <property type="project" value="UniProtKB-UniRule"/>
</dbReference>
<dbReference type="GO" id="GO:0016887">
    <property type="term" value="F:ATP hydrolysis activity"/>
    <property type="evidence" value="ECO:0007669"/>
    <property type="project" value="InterPro"/>
</dbReference>
<dbReference type="GO" id="GO:0140662">
    <property type="term" value="F:ATP-dependent protein folding chaperone"/>
    <property type="evidence" value="ECO:0007669"/>
    <property type="project" value="InterPro"/>
</dbReference>
<dbReference type="GO" id="GO:0046983">
    <property type="term" value="F:protein dimerization activity"/>
    <property type="evidence" value="ECO:0007669"/>
    <property type="project" value="InterPro"/>
</dbReference>
<dbReference type="GO" id="GO:0051082">
    <property type="term" value="F:unfolded protein binding"/>
    <property type="evidence" value="ECO:0007669"/>
    <property type="project" value="UniProtKB-UniRule"/>
</dbReference>
<dbReference type="GO" id="GO:0008270">
    <property type="term" value="F:zinc ion binding"/>
    <property type="evidence" value="ECO:0007669"/>
    <property type="project" value="InterPro"/>
</dbReference>
<dbReference type="GO" id="GO:0051301">
    <property type="term" value="P:cell division"/>
    <property type="evidence" value="ECO:0007669"/>
    <property type="project" value="TreeGrafter"/>
</dbReference>
<dbReference type="GO" id="GO:0051603">
    <property type="term" value="P:proteolysis involved in protein catabolic process"/>
    <property type="evidence" value="ECO:0007669"/>
    <property type="project" value="TreeGrafter"/>
</dbReference>
<dbReference type="CDD" id="cd19497">
    <property type="entry name" value="RecA-like_ClpX"/>
    <property type="match status" value="1"/>
</dbReference>
<dbReference type="FunFam" id="1.10.8.60:FF:000002">
    <property type="entry name" value="ATP-dependent Clp protease ATP-binding subunit ClpX"/>
    <property type="match status" value="1"/>
</dbReference>
<dbReference type="FunFam" id="3.40.50.300:FF:000005">
    <property type="entry name" value="ATP-dependent Clp protease ATP-binding subunit ClpX"/>
    <property type="match status" value="1"/>
</dbReference>
<dbReference type="Gene3D" id="1.10.8.60">
    <property type="match status" value="1"/>
</dbReference>
<dbReference type="Gene3D" id="6.20.220.10">
    <property type="entry name" value="ClpX chaperone, C4-type zinc finger domain"/>
    <property type="match status" value="1"/>
</dbReference>
<dbReference type="Gene3D" id="3.40.50.300">
    <property type="entry name" value="P-loop containing nucleotide triphosphate hydrolases"/>
    <property type="match status" value="1"/>
</dbReference>
<dbReference type="HAMAP" id="MF_00175">
    <property type="entry name" value="ClpX"/>
    <property type="match status" value="1"/>
</dbReference>
<dbReference type="InterPro" id="IPR003593">
    <property type="entry name" value="AAA+_ATPase"/>
</dbReference>
<dbReference type="InterPro" id="IPR050052">
    <property type="entry name" value="ATP-dep_Clp_protease_ClpX"/>
</dbReference>
<dbReference type="InterPro" id="IPR003959">
    <property type="entry name" value="ATPase_AAA_core"/>
</dbReference>
<dbReference type="InterPro" id="IPR019489">
    <property type="entry name" value="Clp_ATPase_C"/>
</dbReference>
<dbReference type="InterPro" id="IPR004487">
    <property type="entry name" value="Clp_protease_ATP-bd_su_ClpX"/>
</dbReference>
<dbReference type="InterPro" id="IPR046425">
    <property type="entry name" value="ClpX_bact"/>
</dbReference>
<dbReference type="InterPro" id="IPR027417">
    <property type="entry name" value="P-loop_NTPase"/>
</dbReference>
<dbReference type="InterPro" id="IPR010603">
    <property type="entry name" value="Znf_CppX_C4"/>
</dbReference>
<dbReference type="InterPro" id="IPR038366">
    <property type="entry name" value="Znf_CppX_C4_sf"/>
</dbReference>
<dbReference type="NCBIfam" id="TIGR00382">
    <property type="entry name" value="clpX"/>
    <property type="match status" value="1"/>
</dbReference>
<dbReference type="NCBIfam" id="NF003745">
    <property type="entry name" value="PRK05342.1"/>
    <property type="match status" value="1"/>
</dbReference>
<dbReference type="PANTHER" id="PTHR48102:SF7">
    <property type="entry name" value="ATP-DEPENDENT CLP PROTEASE ATP-BINDING SUBUNIT CLPX-LIKE, MITOCHONDRIAL"/>
    <property type="match status" value="1"/>
</dbReference>
<dbReference type="PANTHER" id="PTHR48102">
    <property type="entry name" value="ATP-DEPENDENT CLP PROTEASE ATP-BINDING SUBUNIT CLPX-LIKE, MITOCHONDRIAL-RELATED"/>
    <property type="match status" value="1"/>
</dbReference>
<dbReference type="Pfam" id="PF07724">
    <property type="entry name" value="AAA_2"/>
    <property type="match status" value="1"/>
</dbReference>
<dbReference type="Pfam" id="PF10431">
    <property type="entry name" value="ClpB_D2-small"/>
    <property type="match status" value="1"/>
</dbReference>
<dbReference type="Pfam" id="PF06689">
    <property type="entry name" value="zf-C4_ClpX"/>
    <property type="match status" value="1"/>
</dbReference>
<dbReference type="SMART" id="SM00382">
    <property type="entry name" value="AAA"/>
    <property type="match status" value="1"/>
</dbReference>
<dbReference type="SMART" id="SM01086">
    <property type="entry name" value="ClpB_D2-small"/>
    <property type="match status" value="1"/>
</dbReference>
<dbReference type="SMART" id="SM00994">
    <property type="entry name" value="zf-C4_ClpX"/>
    <property type="match status" value="1"/>
</dbReference>
<dbReference type="SUPFAM" id="SSF57716">
    <property type="entry name" value="Glucocorticoid receptor-like (DNA-binding domain)"/>
    <property type="match status" value="1"/>
</dbReference>
<dbReference type="SUPFAM" id="SSF52540">
    <property type="entry name" value="P-loop containing nucleoside triphosphate hydrolases"/>
    <property type="match status" value="1"/>
</dbReference>
<dbReference type="PROSITE" id="PS51902">
    <property type="entry name" value="CLPX_ZB"/>
    <property type="match status" value="1"/>
</dbReference>
<reference key="1">
    <citation type="submission" date="2007-06" db="EMBL/GenBank/DDBJ databases">
        <title>Complete sequence of chromosome of Staphylococcus aureus subsp. aureus JH1.</title>
        <authorList>
            <consortium name="US DOE Joint Genome Institute"/>
            <person name="Copeland A."/>
            <person name="Lucas S."/>
            <person name="Lapidus A."/>
            <person name="Barry K."/>
            <person name="Detter J.C."/>
            <person name="Glavina del Rio T."/>
            <person name="Hammon N."/>
            <person name="Israni S."/>
            <person name="Dalin E."/>
            <person name="Tice H."/>
            <person name="Pitluck S."/>
            <person name="Chain P."/>
            <person name="Malfatti S."/>
            <person name="Shin M."/>
            <person name="Vergez L."/>
            <person name="Schmutz J."/>
            <person name="Larimer F."/>
            <person name="Land M."/>
            <person name="Hauser L."/>
            <person name="Kyrpides N."/>
            <person name="Ivanova N."/>
            <person name="Tomasz A."/>
            <person name="Richardson P."/>
        </authorList>
    </citation>
    <scope>NUCLEOTIDE SEQUENCE [LARGE SCALE GENOMIC DNA]</scope>
    <source>
        <strain>JH1</strain>
    </source>
</reference>
<sequence length="420" mass="46297">MFKFNEDEENLKCSFCGKDQDQVKKLVAGSGVYICNECIELCSEIVEEELAQNTSEAMTELPTPKEIMDHLNEYVIGQEKAKKSLAVAVYNHYKRIQQLGPKEDDVELQKSNIALIGPTGSGKTLLAQTLAKTLNVPFAIADATSLTEAGYVGDDVENILLRLIQAADFDIDKAEKGIIYVDEIDKIARKSENTSITRDVSGEGVQQALLKILEGTTASVPPQGGRKHPNQEMIQIDTTNILFILGGAFDGIEEVIKRRLGEKVIGFSSNEADKYDEQALLAQIRPEDLQAYGLIPEFIGRVPIVANLETLDVTALKNILTQPKNALVKQYTKMLELDDVDLEFTEEALSAISEKAIERKTGARGLRSIIEESLIDIMFDVPSNENVTKVVITAQTINEETEPELYDAEGNLINNSKTSA</sequence>
<protein>
    <recommendedName>
        <fullName evidence="1">ATP-dependent Clp protease ATP-binding subunit ClpX</fullName>
    </recommendedName>
</protein>